<gene>
    <name evidence="1" type="primary">der</name>
    <name type="synonym">engA</name>
    <name type="ordered locus">MCCL_1126</name>
</gene>
<accession>B9E6L5</accession>
<feature type="chain" id="PRO_1000124363" description="GTPase Der">
    <location>
        <begin position="1"/>
        <end position="436"/>
    </location>
</feature>
<feature type="domain" description="EngA-type G 1">
    <location>
        <begin position="4"/>
        <end position="167"/>
    </location>
</feature>
<feature type="domain" description="EngA-type G 2">
    <location>
        <begin position="176"/>
        <end position="351"/>
    </location>
</feature>
<feature type="domain" description="KH-like" evidence="1">
    <location>
        <begin position="352"/>
        <end position="436"/>
    </location>
</feature>
<feature type="binding site" evidence="1">
    <location>
        <begin position="10"/>
        <end position="17"/>
    </location>
    <ligand>
        <name>GTP</name>
        <dbReference type="ChEBI" id="CHEBI:37565"/>
        <label>1</label>
    </ligand>
</feature>
<feature type="binding site" evidence="1">
    <location>
        <begin position="57"/>
        <end position="61"/>
    </location>
    <ligand>
        <name>GTP</name>
        <dbReference type="ChEBI" id="CHEBI:37565"/>
        <label>1</label>
    </ligand>
</feature>
<feature type="binding site" evidence="1">
    <location>
        <begin position="119"/>
        <end position="122"/>
    </location>
    <ligand>
        <name>GTP</name>
        <dbReference type="ChEBI" id="CHEBI:37565"/>
        <label>1</label>
    </ligand>
</feature>
<feature type="binding site" evidence="1">
    <location>
        <begin position="182"/>
        <end position="189"/>
    </location>
    <ligand>
        <name>GTP</name>
        <dbReference type="ChEBI" id="CHEBI:37565"/>
        <label>2</label>
    </ligand>
</feature>
<feature type="binding site" evidence="1">
    <location>
        <begin position="229"/>
        <end position="233"/>
    </location>
    <ligand>
        <name>GTP</name>
        <dbReference type="ChEBI" id="CHEBI:37565"/>
        <label>2</label>
    </ligand>
</feature>
<feature type="binding site" evidence="1">
    <location>
        <begin position="294"/>
        <end position="297"/>
    </location>
    <ligand>
        <name>GTP</name>
        <dbReference type="ChEBI" id="CHEBI:37565"/>
        <label>2</label>
    </ligand>
</feature>
<organism>
    <name type="scientific">Macrococcus caseolyticus (strain JCSC5402)</name>
    <name type="common">Macrococcoides caseolyticum</name>
    <dbReference type="NCBI Taxonomy" id="458233"/>
    <lineage>
        <taxon>Bacteria</taxon>
        <taxon>Bacillati</taxon>
        <taxon>Bacillota</taxon>
        <taxon>Bacilli</taxon>
        <taxon>Bacillales</taxon>
        <taxon>Staphylococcaceae</taxon>
        <taxon>Macrococcoides</taxon>
    </lineage>
</organism>
<sequence length="436" mass="49024">MTKPTIAIVGRANVGKSTIFNRIVGERVSIVEDTPGVTRDRIYSSGEWLTHEFNIIDTGGIELGDEPFQEQIRAQAEIAIEEADVIIFMVNGRDGITNEDDFVAKLLFKSSKPVVLGVNKIDNPEMRADIYEFYSLGFGEPFPISGSHGLGIGDLLDEAAKHFPEQQEEDYDDDVIKFSLIGRPNVGKSSLINAILGEERVIVSPVAGTTRDAIDTVYTFENQEYVMIDTAGMRKKGKVYEATERYSVLRALKAIERSNVVLVVIDAEEGIIEQDKKIAGYAHEAGKAIVIVVNKWDTVEKDSKTMKKFEDKVRENFQFLDYAPIAFVSAKERKRLNTLFPLINMAGENHRKRVQSSTLNEVITDAVAMNPTPTHKGSRLNIFYTTQVAIEPPTFVFFVNDVEMMHFSYQRFLENRIRAAFGFEGTPLHLIARKRN</sequence>
<keyword id="KW-0342">GTP-binding</keyword>
<keyword id="KW-0547">Nucleotide-binding</keyword>
<keyword id="KW-1185">Reference proteome</keyword>
<keyword id="KW-0677">Repeat</keyword>
<keyword id="KW-0690">Ribosome biogenesis</keyword>
<dbReference type="EMBL" id="AP009484">
    <property type="protein sequence ID" value="BAH17833.1"/>
    <property type="molecule type" value="Genomic_DNA"/>
</dbReference>
<dbReference type="RefSeq" id="WP_012657031.1">
    <property type="nucleotide sequence ID" value="NC_011999.1"/>
</dbReference>
<dbReference type="SMR" id="B9E6L5"/>
<dbReference type="STRING" id="458233.MCCL_1126"/>
<dbReference type="GeneID" id="61128993"/>
<dbReference type="KEGG" id="mcl:MCCL_1126"/>
<dbReference type="eggNOG" id="COG1160">
    <property type="taxonomic scope" value="Bacteria"/>
</dbReference>
<dbReference type="HOGENOM" id="CLU_016077_6_2_9"/>
<dbReference type="OrthoDB" id="9805918at2"/>
<dbReference type="Proteomes" id="UP000001383">
    <property type="component" value="Chromosome"/>
</dbReference>
<dbReference type="GO" id="GO:0005525">
    <property type="term" value="F:GTP binding"/>
    <property type="evidence" value="ECO:0007669"/>
    <property type="project" value="UniProtKB-UniRule"/>
</dbReference>
<dbReference type="GO" id="GO:0043022">
    <property type="term" value="F:ribosome binding"/>
    <property type="evidence" value="ECO:0007669"/>
    <property type="project" value="TreeGrafter"/>
</dbReference>
<dbReference type="GO" id="GO:0042254">
    <property type="term" value="P:ribosome biogenesis"/>
    <property type="evidence" value="ECO:0007669"/>
    <property type="project" value="UniProtKB-KW"/>
</dbReference>
<dbReference type="CDD" id="cd01894">
    <property type="entry name" value="EngA1"/>
    <property type="match status" value="1"/>
</dbReference>
<dbReference type="CDD" id="cd01895">
    <property type="entry name" value="EngA2"/>
    <property type="match status" value="1"/>
</dbReference>
<dbReference type="FunFam" id="3.30.300.20:FF:000004">
    <property type="entry name" value="GTPase Der"/>
    <property type="match status" value="1"/>
</dbReference>
<dbReference type="FunFam" id="3.40.50.300:FF:000040">
    <property type="entry name" value="GTPase Der"/>
    <property type="match status" value="1"/>
</dbReference>
<dbReference type="FunFam" id="3.40.50.300:FF:000057">
    <property type="entry name" value="GTPase Der"/>
    <property type="match status" value="1"/>
</dbReference>
<dbReference type="Gene3D" id="3.30.300.20">
    <property type="match status" value="1"/>
</dbReference>
<dbReference type="Gene3D" id="3.40.50.300">
    <property type="entry name" value="P-loop containing nucleotide triphosphate hydrolases"/>
    <property type="match status" value="2"/>
</dbReference>
<dbReference type="HAMAP" id="MF_00195">
    <property type="entry name" value="GTPase_Der"/>
    <property type="match status" value="1"/>
</dbReference>
<dbReference type="InterPro" id="IPR031166">
    <property type="entry name" value="G_ENGA"/>
</dbReference>
<dbReference type="InterPro" id="IPR006073">
    <property type="entry name" value="GTP-bd"/>
</dbReference>
<dbReference type="InterPro" id="IPR016484">
    <property type="entry name" value="GTPase_Der"/>
</dbReference>
<dbReference type="InterPro" id="IPR032859">
    <property type="entry name" value="KH_dom-like"/>
</dbReference>
<dbReference type="InterPro" id="IPR015946">
    <property type="entry name" value="KH_dom-like_a/b"/>
</dbReference>
<dbReference type="InterPro" id="IPR027417">
    <property type="entry name" value="P-loop_NTPase"/>
</dbReference>
<dbReference type="InterPro" id="IPR005225">
    <property type="entry name" value="Small_GTP-bd"/>
</dbReference>
<dbReference type="NCBIfam" id="TIGR03594">
    <property type="entry name" value="GTPase_EngA"/>
    <property type="match status" value="1"/>
</dbReference>
<dbReference type="NCBIfam" id="TIGR00231">
    <property type="entry name" value="small_GTP"/>
    <property type="match status" value="2"/>
</dbReference>
<dbReference type="PANTHER" id="PTHR43834">
    <property type="entry name" value="GTPASE DER"/>
    <property type="match status" value="1"/>
</dbReference>
<dbReference type="PANTHER" id="PTHR43834:SF6">
    <property type="entry name" value="GTPASE DER"/>
    <property type="match status" value="1"/>
</dbReference>
<dbReference type="Pfam" id="PF14714">
    <property type="entry name" value="KH_dom-like"/>
    <property type="match status" value="1"/>
</dbReference>
<dbReference type="Pfam" id="PF01926">
    <property type="entry name" value="MMR_HSR1"/>
    <property type="match status" value="2"/>
</dbReference>
<dbReference type="PIRSF" id="PIRSF006485">
    <property type="entry name" value="GTP-binding_EngA"/>
    <property type="match status" value="1"/>
</dbReference>
<dbReference type="PRINTS" id="PR00326">
    <property type="entry name" value="GTP1OBG"/>
</dbReference>
<dbReference type="SUPFAM" id="SSF52540">
    <property type="entry name" value="P-loop containing nucleoside triphosphate hydrolases"/>
    <property type="match status" value="2"/>
</dbReference>
<dbReference type="PROSITE" id="PS51712">
    <property type="entry name" value="G_ENGA"/>
    <property type="match status" value="2"/>
</dbReference>
<comment type="function">
    <text evidence="1">GTPase that plays an essential role in the late steps of ribosome biogenesis.</text>
</comment>
<comment type="subunit">
    <text evidence="1">Associates with the 50S ribosomal subunit.</text>
</comment>
<comment type="similarity">
    <text evidence="1">Belongs to the TRAFAC class TrmE-Era-EngA-EngB-Septin-like GTPase superfamily. EngA (Der) GTPase family.</text>
</comment>
<evidence type="ECO:0000255" key="1">
    <source>
        <dbReference type="HAMAP-Rule" id="MF_00195"/>
    </source>
</evidence>
<name>DER_MACCJ</name>
<reference key="1">
    <citation type="journal article" date="2009" name="J. Bacteriol.">
        <title>Complete genome sequence of Macrococcus caseolyticus strain JCSCS5402, reflecting the ancestral genome of the human-pathogenic staphylococci.</title>
        <authorList>
            <person name="Baba T."/>
            <person name="Kuwahara-Arai K."/>
            <person name="Uchiyama I."/>
            <person name="Takeuchi F."/>
            <person name="Ito T."/>
            <person name="Hiramatsu K."/>
        </authorList>
    </citation>
    <scope>NUCLEOTIDE SEQUENCE [LARGE SCALE GENOMIC DNA]</scope>
    <source>
        <strain>JCSC5402</strain>
    </source>
</reference>
<proteinExistence type="inferred from homology"/>
<protein>
    <recommendedName>
        <fullName evidence="1">GTPase Der</fullName>
    </recommendedName>
    <alternativeName>
        <fullName evidence="1">GTP-binding protein EngA</fullName>
    </alternativeName>
</protein>